<sequence>MGTRCLLVLLLVLLVLKCEVQGDDMARQDEATGPTLLSQMQESLYGYWGSAKAAAQDLYEKTYLTAMDEKIRDMYSTSTAAVRIYTGILTDQILSMLTGDP</sequence>
<reference key="1">
    <citation type="journal article" date="2013" name="Nat. Commun.">
        <title>The tiger genome and comparative analysis with lion and snow leopard genomes.</title>
        <authorList>
            <person name="Cho Y.S."/>
            <person name="Hu L."/>
            <person name="Hou H."/>
            <person name="Lee H."/>
            <person name="Xu J."/>
            <person name="Kwon S."/>
            <person name="Oh S."/>
            <person name="Kim H.M."/>
            <person name="Jho S."/>
            <person name="Kim S."/>
            <person name="Shin Y.A."/>
            <person name="Kim B.C."/>
            <person name="Kim H."/>
            <person name="Kim C.U."/>
            <person name="Luo S.J."/>
            <person name="Johnson W.E."/>
            <person name="Koepfli K.P."/>
            <person name="Schmidt-Kuntzel A."/>
            <person name="Turner J.A."/>
            <person name="Marker L."/>
            <person name="Harper C."/>
            <person name="Miller S.M."/>
            <person name="Jacobs W."/>
            <person name="Bertola L.D."/>
            <person name="Kim T.H."/>
            <person name="Lee S."/>
            <person name="Zhou Q."/>
            <person name="Jung H.J."/>
            <person name="Xu X."/>
            <person name="Gadhvi P."/>
            <person name="Xu P."/>
            <person name="Xiong Y."/>
            <person name="Luo Y."/>
            <person name="Pan S."/>
            <person name="Gou C."/>
            <person name="Chu X."/>
            <person name="Zhang J."/>
            <person name="Liu S."/>
            <person name="He J."/>
            <person name="Chen Y."/>
            <person name="Yang L."/>
            <person name="Yang Y."/>
            <person name="He J."/>
            <person name="Liu S."/>
            <person name="Wang J."/>
            <person name="Kim C.H."/>
            <person name="Kwak H."/>
            <person name="Kim J.S."/>
            <person name="Hwang S."/>
            <person name="Ko J."/>
            <person name="Kim C.B."/>
            <person name="Kim S."/>
            <person name="Bayarlkhagva D."/>
            <person name="Paek W.K."/>
            <person name="Kim S.J."/>
            <person name="O'Brien S.J."/>
            <person name="Wang J."/>
            <person name="Bhak J."/>
        </authorList>
    </citation>
    <scope>NUCLEOTIDE SEQUENCE [LARGE SCALE GENOMIC DNA]</scope>
</reference>
<reference key="2">
    <citation type="submission" date="2013-05" db="EMBL/GenBank/DDBJ databases">
        <title>The study of functional genes in the Siberian tiger liver.</title>
        <authorList>
            <person name="Guan W."/>
            <person name="Lu T."/>
            <person name="Liu C."/>
            <person name="Bai C."/>
            <person name="Sun Y."/>
            <person name="Sun T."/>
            <person name="Li Q."/>
            <person name="Sun B."/>
            <person name="Wang K."/>
        </authorList>
    </citation>
    <scope>NUCLEOTIDE SEQUENCE [MRNA] OF 78-101</scope>
    <source>
        <tissue>Kidney</tissue>
        <tissue>Liver</tissue>
    </source>
</reference>
<reference key="3">
    <citation type="unpublished observations" date="2014-09">
        <authorList>
            <person name="Puppione D.L."/>
        </authorList>
    </citation>
    <scope>IDENTIFICATION</scope>
</reference>
<accession>T1W425</accession>
<accession>T1W2Z5</accession>
<evidence type="ECO:0000250" key="1">
    <source>
        <dbReference type="UniProtKB" id="P02655"/>
    </source>
</evidence>
<evidence type="ECO:0000255" key="2"/>
<evidence type="ECO:0000305" key="3"/>
<feature type="signal peptide" evidence="2">
    <location>
        <begin position="1"/>
        <end position="22"/>
    </location>
</feature>
<feature type="chain" id="PRO_0000430847" description="Proapolipoprotein C-II">
    <location>
        <begin position="23"/>
        <end position="101"/>
    </location>
</feature>
<feature type="propeptide" id="PRO_0000430848" description="Removed in mature form" evidence="1">
    <location>
        <begin position="23"/>
        <end position="28"/>
    </location>
</feature>
<feature type="chain" id="PRO_0000430849" description="Apolipoprotein C-II" evidence="1">
    <location>
        <begin position="29"/>
        <end position="101"/>
    </location>
</feature>
<feature type="region of interest" description="Lipid binding" evidence="1">
    <location>
        <begin position="66"/>
        <end position="74"/>
    </location>
</feature>
<feature type="region of interest" description="Lipoprotein lipase cofactor" evidence="1">
    <location>
        <begin position="78"/>
        <end position="101"/>
    </location>
</feature>
<feature type="sequence conflict" description="In Ref. 2; AGU01736." ref="2">
    <original>L</original>
    <variation>F</variation>
    <location>
        <position position="89"/>
    </location>
</feature>
<feature type="sequence conflict" description="In Ref. 2; AGU01736." ref="2">
    <original>S</original>
    <variation>F</variation>
    <location>
        <position position="95"/>
    </location>
</feature>
<organism>
    <name type="scientific">Panthera tigris altaica</name>
    <name type="common">Siberian tiger</name>
    <dbReference type="NCBI Taxonomy" id="74533"/>
    <lineage>
        <taxon>Eukaryota</taxon>
        <taxon>Metazoa</taxon>
        <taxon>Chordata</taxon>
        <taxon>Craniata</taxon>
        <taxon>Vertebrata</taxon>
        <taxon>Euteleostomi</taxon>
        <taxon>Mammalia</taxon>
        <taxon>Eutheria</taxon>
        <taxon>Laurasiatheria</taxon>
        <taxon>Carnivora</taxon>
        <taxon>Feliformia</taxon>
        <taxon>Felidae</taxon>
        <taxon>Pantherinae</taxon>
        <taxon>Panthera</taxon>
    </lineage>
</organism>
<comment type="function">
    <text evidence="1">Component of chylomicrons, very low-density lipoproteins (VLDL), low-density lipoproteins (LDL), and high-density lipoproteins (HDL) in plasma. Plays an important role in lipoprotein metabolism as an activator of lipoprotein lipase, the enzyme which hydrolyzes the triacylglycerols on chylomicrons and VLDL.</text>
</comment>
<comment type="subcellular location">
    <subcellularLocation>
        <location evidence="1">Secreted</location>
    </subcellularLocation>
</comment>
<comment type="PTM">
    <text evidence="1">Proapolipoprotein C-II is synthesized as a sialic acid containing glycoprotein which is subsequently desialylated prior to its proteolytic processing.</text>
</comment>
<comment type="PTM">
    <text evidence="1">Proapolipoprotein C-II, the major form found in plasma undergoes proteolytic cleavage of its N-terminal hexapeptide to generate the mature form apolipoprotein C-II, which occurs as the minor form in plasma.</text>
</comment>
<comment type="similarity">
    <text evidence="3">Belongs to the apolipoprotein C2 family.</text>
</comment>
<comment type="sequence caution" evidence="3">
    <conflict type="frameshift">
        <sequence resource="EMBL-CDS" id="AGU01719"/>
    </conflict>
</comment>
<name>APOC2_PANTA</name>
<gene>
    <name type="primary">APOC2</name>
</gene>
<protein>
    <recommendedName>
        <fullName>Apolipoprotein C-II</fullName>
        <shortName>Apo-CII</shortName>
        <shortName>ApoC-II</shortName>
    </recommendedName>
    <alternativeName>
        <fullName>Apolipoprotein C2</fullName>
    </alternativeName>
    <component>
        <recommendedName>
            <fullName>Proapolipoprotein C-II</fullName>
            <shortName>ProapoC-II</shortName>
        </recommendedName>
    </component>
</protein>
<proteinExistence type="inferred from homology"/>
<dbReference type="EMBL" id="ATCQ01140320">
    <property type="status" value="NOT_ANNOTATED_CDS"/>
    <property type="molecule type" value="Genomic_RNA"/>
</dbReference>
<dbReference type="EMBL" id="KF051817">
    <property type="protein sequence ID" value="AGU01719.1"/>
    <property type="status" value="ALT_FRAME"/>
    <property type="molecule type" value="mRNA"/>
</dbReference>
<dbReference type="EMBL" id="KF028906">
    <property type="protein sequence ID" value="AGU01736.1"/>
    <property type="molecule type" value="mRNA"/>
</dbReference>
<dbReference type="RefSeq" id="XP_007096583.1">
    <property type="nucleotide sequence ID" value="XM_007096521.2"/>
</dbReference>
<dbReference type="SMR" id="T1W425"/>
<dbReference type="Ensembl" id="ENSPTIT00000029201.1">
    <property type="protein sequence ID" value="ENSPTIP00000024715.1"/>
    <property type="gene ID" value="ENSPTIG00000020728.1"/>
</dbReference>
<dbReference type="GeneID" id="102949268"/>
<dbReference type="KEGG" id="ptg:102949268"/>
<dbReference type="CTD" id="344"/>
<dbReference type="GeneTree" id="ENSGT00390000007913"/>
<dbReference type="Proteomes" id="UP000675900">
    <property type="component" value="Unassembled WGS sequence"/>
</dbReference>
<dbReference type="GO" id="GO:0042627">
    <property type="term" value="C:chylomicron"/>
    <property type="evidence" value="ECO:0007669"/>
    <property type="project" value="UniProtKB-KW"/>
</dbReference>
<dbReference type="GO" id="GO:0034363">
    <property type="term" value="C:intermediate-density lipoprotein particle"/>
    <property type="evidence" value="ECO:0007669"/>
    <property type="project" value="Ensembl"/>
</dbReference>
<dbReference type="GO" id="GO:0034362">
    <property type="term" value="C:low-density lipoprotein particle"/>
    <property type="evidence" value="ECO:0007669"/>
    <property type="project" value="UniProtKB-KW"/>
</dbReference>
<dbReference type="GO" id="GO:0034366">
    <property type="term" value="C:spherical high-density lipoprotein particle"/>
    <property type="evidence" value="ECO:0007669"/>
    <property type="project" value="Ensembl"/>
</dbReference>
<dbReference type="GO" id="GO:0034361">
    <property type="term" value="C:very-low-density lipoprotein particle"/>
    <property type="evidence" value="ECO:0007669"/>
    <property type="project" value="UniProtKB-KW"/>
</dbReference>
<dbReference type="GO" id="GO:0055102">
    <property type="term" value="F:lipase inhibitor activity"/>
    <property type="evidence" value="ECO:0007669"/>
    <property type="project" value="Ensembl"/>
</dbReference>
<dbReference type="GO" id="GO:0008289">
    <property type="term" value="F:lipid binding"/>
    <property type="evidence" value="ECO:0007669"/>
    <property type="project" value="Ensembl"/>
</dbReference>
<dbReference type="GO" id="GO:0060230">
    <property type="term" value="F:lipoprotein lipase activator activity"/>
    <property type="evidence" value="ECO:0007669"/>
    <property type="project" value="Ensembl"/>
</dbReference>
<dbReference type="GO" id="GO:0016004">
    <property type="term" value="F:phospholipase activator activity"/>
    <property type="evidence" value="ECO:0007669"/>
    <property type="project" value="Ensembl"/>
</dbReference>
<dbReference type="GO" id="GO:0043274">
    <property type="term" value="F:phospholipase binding"/>
    <property type="evidence" value="ECO:0007669"/>
    <property type="project" value="Ensembl"/>
</dbReference>
<dbReference type="GO" id="GO:0033344">
    <property type="term" value="P:cholesterol efflux"/>
    <property type="evidence" value="ECO:0007669"/>
    <property type="project" value="Ensembl"/>
</dbReference>
<dbReference type="GO" id="GO:0034382">
    <property type="term" value="P:chylomicron remnant clearance"/>
    <property type="evidence" value="ECO:0007669"/>
    <property type="project" value="Ensembl"/>
</dbReference>
<dbReference type="GO" id="GO:0034371">
    <property type="term" value="P:chylomicron remodeling"/>
    <property type="evidence" value="ECO:0007669"/>
    <property type="project" value="Ensembl"/>
</dbReference>
<dbReference type="GO" id="GO:0034384">
    <property type="term" value="P:high-density lipoprotein particle clearance"/>
    <property type="evidence" value="ECO:0007669"/>
    <property type="project" value="Ensembl"/>
</dbReference>
<dbReference type="GO" id="GO:0016042">
    <property type="term" value="P:lipid catabolic process"/>
    <property type="evidence" value="ECO:0007669"/>
    <property type="project" value="UniProtKB-KW"/>
</dbReference>
<dbReference type="GO" id="GO:0032375">
    <property type="term" value="P:negative regulation of cholesterol transport"/>
    <property type="evidence" value="ECO:0007669"/>
    <property type="project" value="Ensembl"/>
</dbReference>
<dbReference type="GO" id="GO:0045833">
    <property type="term" value="P:negative regulation of lipid metabolic process"/>
    <property type="evidence" value="ECO:0007669"/>
    <property type="project" value="Ensembl"/>
</dbReference>
<dbReference type="GO" id="GO:0048261">
    <property type="term" value="P:negative regulation of receptor-mediated endocytosis"/>
    <property type="evidence" value="ECO:0007669"/>
    <property type="project" value="Ensembl"/>
</dbReference>
<dbReference type="GO" id="GO:0010916">
    <property type="term" value="P:negative regulation of very-low-density lipoprotein particle clearance"/>
    <property type="evidence" value="ECO:0007669"/>
    <property type="project" value="Ensembl"/>
</dbReference>
<dbReference type="GO" id="GO:0033700">
    <property type="term" value="P:phospholipid efflux"/>
    <property type="evidence" value="ECO:0007669"/>
    <property type="project" value="Ensembl"/>
</dbReference>
<dbReference type="GO" id="GO:0045723">
    <property type="term" value="P:positive regulation of fatty acid biosynthetic process"/>
    <property type="evidence" value="ECO:0007669"/>
    <property type="project" value="Ensembl"/>
</dbReference>
<dbReference type="GO" id="GO:0060697">
    <property type="term" value="P:positive regulation of phospholipid catabolic process"/>
    <property type="evidence" value="ECO:0007669"/>
    <property type="project" value="Ensembl"/>
</dbReference>
<dbReference type="GO" id="GO:0010898">
    <property type="term" value="P:positive regulation of triglyceride catabolic process"/>
    <property type="evidence" value="ECO:0007669"/>
    <property type="project" value="Ensembl"/>
</dbReference>
<dbReference type="GO" id="GO:0010902">
    <property type="term" value="P:positive regulation of very-low-density lipoprotein particle remodeling"/>
    <property type="evidence" value="ECO:0007669"/>
    <property type="project" value="Ensembl"/>
</dbReference>
<dbReference type="GO" id="GO:0070328">
    <property type="term" value="P:triglyceride homeostasis"/>
    <property type="evidence" value="ECO:0007669"/>
    <property type="project" value="Ensembl"/>
</dbReference>
<dbReference type="FunFam" id="1.10.1440.10:FF:000001">
    <property type="entry name" value="Apolipoprotein C-II"/>
    <property type="match status" value="1"/>
</dbReference>
<dbReference type="Gene3D" id="1.10.1440.10">
    <property type="entry name" value="Apolipoprotein C-II"/>
    <property type="match status" value="1"/>
</dbReference>
<dbReference type="InterPro" id="IPR008019">
    <property type="entry name" value="Apo-CII"/>
</dbReference>
<dbReference type="InterPro" id="IPR023121">
    <property type="entry name" value="ApoC-II_dom_sf"/>
</dbReference>
<dbReference type="PANTHER" id="PTHR16566">
    <property type="entry name" value="APOLIPOPROTEIN C-II"/>
    <property type="match status" value="1"/>
</dbReference>
<dbReference type="PANTHER" id="PTHR16566:SF0">
    <property type="entry name" value="APOLIPOPROTEIN C-II"/>
    <property type="match status" value="1"/>
</dbReference>
<dbReference type="Pfam" id="PF05355">
    <property type="entry name" value="Apo-CII"/>
    <property type="match status" value="1"/>
</dbReference>
<keyword id="KW-0162">Chylomicron</keyword>
<keyword id="KW-0325">Glycoprotein</keyword>
<keyword id="KW-0345">HDL</keyword>
<keyword id="KW-0427">LDL</keyword>
<keyword id="KW-0442">Lipid degradation</keyword>
<keyword id="KW-0443">Lipid metabolism</keyword>
<keyword id="KW-0445">Lipid transport</keyword>
<keyword id="KW-1185">Reference proteome</keyword>
<keyword id="KW-0964">Secreted</keyword>
<keyword id="KW-0730">Sialic acid</keyword>
<keyword id="KW-0732">Signal</keyword>
<keyword id="KW-0813">Transport</keyword>
<keyword id="KW-0850">VLDL</keyword>